<proteinExistence type="evidence at protein level"/>
<comment type="catalytic activity">
    <reaction evidence="4">
        <text>1-(5-phospho-beta-D-ribosyl)-5'-AMP + H2O = 1-(5-phospho-beta-D-ribosyl)-5-[(5-phospho-beta-D-ribosylamino)methylideneamino]imidazole-4-carboxamide</text>
        <dbReference type="Rhea" id="RHEA:20049"/>
        <dbReference type="ChEBI" id="CHEBI:15377"/>
        <dbReference type="ChEBI" id="CHEBI:58435"/>
        <dbReference type="ChEBI" id="CHEBI:59457"/>
        <dbReference type="EC" id="3.5.4.19"/>
    </reaction>
</comment>
<comment type="catalytic activity">
    <reaction evidence="2">
        <text>1-(5-phospho-beta-D-ribosyl)-ATP + H2O = 1-(5-phospho-beta-D-ribosyl)-5'-AMP + diphosphate + H(+)</text>
        <dbReference type="Rhea" id="RHEA:22828"/>
        <dbReference type="ChEBI" id="CHEBI:15377"/>
        <dbReference type="ChEBI" id="CHEBI:15378"/>
        <dbReference type="ChEBI" id="CHEBI:33019"/>
        <dbReference type="ChEBI" id="CHEBI:59457"/>
        <dbReference type="ChEBI" id="CHEBI:73183"/>
        <dbReference type="EC" id="3.6.1.31"/>
    </reaction>
</comment>
<comment type="catalytic activity">
    <reaction evidence="3">
        <text>L-histidinol + 2 NAD(+) + H2O = L-histidine + 2 NADH + 3 H(+)</text>
        <dbReference type="Rhea" id="RHEA:20641"/>
        <dbReference type="ChEBI" id="CHEBI:15377"/>
        <dbReference type="ChEBI" id="CHEBI:15378"/>
        <dbReference type="ChEBI" id="CHEBI:57540"/>
        <dbReference type="ChEBI" id="CHEBI:57595"/>
        <dbReference type="ChEBI" id="CHEBI:57699"/>
        <dbReference type="ChEBI" id="CHEBI:57945"/>
        <dbReference type="EC" id="1.1.1.23"/>
    </reaction>
</comment>
<comment type="cofactor">
    <cofactor evidence="3">
        <name>Zn(2+)</name>
        <dbReference type="ChEBI" id="CHEBI:29105"/>
    </cofactor>
    <text evidence="3">Binds 1 zinc ion.</text>
</comment>
<comment type="pathway">
    <text>Amino-acid biosynthesis; L-histidine biosynthesis; L-histidine from 5-phospho-alpha-D-ribose 1-diphosphate: step 2/9.</text>
</comment>
<comment type="pathway">
    <text>Amino-acid biosynthesis; L-histidine biosynthesis; L-histidine from 5-phospho-alpha-D-ribose 1-diphosphate: step 3/9.</text>
</comment>
<comment type="pathway">
    <text>Amino-acid biosynthesis; L-histidine biosynthesis; L-histidine from 5-phospho-alpha-D-ribose 1-diphosphate: step 9/9.</text>
</comment>
<comment type="interaction">
    <interactant intactId="EBI-8334">
        <id>P00815</id>
    </interactant>
    <interactant intactId="EBI-9664">
        <id>P53233</id>
        <label>FMP48</label>
    </interactant>
    <organismsDiffer>false</organismsDiffer>
    <experiments>3</experiments>
</comment>
<comment type="induction">
    <text evidence="6">Induced by amino acid and purine starvation in a GCN4 dependent manner.</text>
</comment>
<comment type="miscellaneous">
    <text evidence="5">Present with 521 molecules/cell in log phase SD medium.</text>
</comment>
<comment type="similarity">
    <text evidence="8">In the C-terminal section; belongs to the histidinol dehydrogenase family.</text>
</comment>
<evidence type="ECO:0000250" key="1"/>
<evidence type="ECO:0000250" key="2">
    <source>
        <dbReference type="UniProtKB" id="O82768"/>
    </source>
</evidence>
<evidence type="ECO:0000250" key="3">
    <source>
        <dbReference type="UniProtKB" id="P9WNW9"/>
    </source>
</evidence>
<evidence type="ECO:0000250" key="4">
    <source>
        <dbReference type="UniProtKB" id="Q50837"/>
    </source>
</evidence>
<evidence type="ECO:0000269" key="5">
    <source>
    </source>
</evidence>
<evidence type="ECO:0000269" key="6">
    <source>
    </source>
</evidence>
<evidence type="ECO:0000303" key="7">
    <source>
    </source>
</evidence>
<evidence type="ECO:0000305" key="8"/>
<evidence type="ECO:0000312" key="9">
    <source>
        <dbReference type="SGD" id="S000000535"/>
    </source>
</evidence>
<name>HIS2_YEAST</name>
<accession>P00815</accession>
<accession>D6VQY5</accession>
<gene>
    <name evidence="7 9" type="primary">HIS4</name>
    <name type="ordered locus">YCL030C</name>
    <name type="ORF">YCL183</name>
    <name type="ORF">YCL30C</name>
</gene>
<keyword id="KW-0028">Amino-acid biosynthesis</keyword>
<keyword id="KW-0067">ATP-binding</keyword>
<keyword id="KW-0368">Histidine biosynthesis</keyword>
<keyword id="KW-0378">Hydrolase</keyword>
<keyword id="KW-0479">Metal-binding</keyword>
<keyword id="KW-0511">Multifunctional enzyme</keyword>
<keyword id="KW-0520">NAD</keyword>
<keyword id="KW-0547">Nucleotide-binding</keyword>
<keyword id="KW-0560">Oxidoreductase</keyword>
<keyword id="KW-1185">Reference proteome</keyword>
<keyword id="KW-0862">Zinc</keyword>
<reference key="1">
    <citation type="journal article" date="1982" name="Gene">
        <title>The nucleotide sequence of the HIS4 region of yeast.</title>
        <authorList>
            <person name="Donahue T.F."/>
            <person name="Farabaugh P.J."/>
            <person name="Fink G.R."/>
        </authorList>
    </citation>
    <scope>NUCLEOTIDE SEQUENCE [GENOMIC DNA]</scope>
    <source>
        <strain>ATCC 204508 / S288c</strain>
    </source>
</reference>
<reference key="2">
    <citation type="journal article" date="1991" name="Yeast">
        <title>The complete sequence of a 11,953 bp fragment from C1G on chromosome III encompasses four new open reading frames.</title>
        <authorList>
            <person name="Rad M.R."/>
            <person name="Luetzenkirchen K."/>
            <person name="Xu G."/>
            <person name="Kleinhans U."/>
            <person name="Hollenberg C.P."/>
        </authorList>
    </citation>
    <scope>NUCLEOTIDE SEQUENCE</scope>
</reference>
<reference key="3">
    <citation type="journal article" date="1992" name="Nature">
        <title>The complete DNA sequence of yeast chromosome III.</title>
        <authorList>
            <person name="Oliver S.G."/>
            <person name="van der Aart Q.J.M."/>
            <person name="Agostoni-Carbone M.L."/>
            <person name="Aigle M."/>
            <person name="Alberghina L."/>
            <person name="Alexandraki D."/>
            <person name="Antoine G."/>
            <person name="Anwar R."/>
            <person name="Ballesta J.P.G."/>
            <person name="Benit P."/>
            <person name="Berben G."/>
            <person name="Bergantino E."/>
            <person name="Biteau N."/>
            <person name="Bolle P.-A."/>
            <person name="Bolotin-Fukuhara M."/>
            <person name="Brown A."/>
            <person name="Brown A.J.P."/>
            <person name="Buhler J.-M."/>
            <person name="Carcano C."/>
            <person name="Carignani G."/>
            <person name="Cederberg H."/>
            <person name="Chanet R."/>
            <person name="Contreras R."/>
            <person name="Crouzet M."/>
            <person name="Daignan-Fornier B."/>
            <person name="Defoor E."/>
            <person name="Delgado M.D."/>
            <person name="Demolder J."/>
            <person name="Doira C."/>
            <person name="Dubois E."/>
            <person name="Dujon B."/>
            <person name="Duesterhoeft A."/>
            <person name="Erdmann D."/>
            <person name="Esteban M."/>
            <person name="Fabre F."/>
            <person name="Fairhead C."/>
            <person name="Faye G."/>
            <person name="Feldmann H."/>
            <person name="Fiers W."/>
            <person name="Francingues-Gaillard M.-C."/>
            <person name="Franco L."/>
            <person name="Frontali L."/>
            <person name="Fukuhara H."/>
            <person name="Fuller L.J."/>
            <person name="Galland P."/>
            <person name="Gent M.E."/>
            <person name="Gigot D."/>
            <person name="Gilliquet V."/>
            <person name="Glansdorff N."/>
            <person name="Goffeau A."/>
            <person name="Grenson M."/>
            <person name="Grisanti P."/>
            <person name="Grivell L.A."/>
            <person name="de Haan M."/>
            <person name="Haasemann M."/>
            <person name="Hatat D."/>
            <person name="Hoenicka J."/>
            <person name="Hegemann J.H."/>
            <person name="Herbert C.J."/>
            <person name="Hilger F."/>
            <person name="Hohmann S."/>
            <person name="Hollenberg C.P."/>
            <person name="Huse K."/>
            <person name="Iborra F."/>
            <person name="Indge K.J."/>
            <person name="Isono K."/>
            <person name="Jacq C."/>
            <person name="Jacquet M."/>
            <person name="James C.M."/>
            <person name="Jauniaux J.-C."/>
            <person name="Jia Y."/>
            <person name="Jimenez A."/>
            <person name="Kelly A."/>
            <person name="Kleinhans U."/>
            <person name="Kreisl P."/>
            <person name="Lanfranchi G."/>
            <person name="Lewis C."/>
            <person name="van der Linden C.G."/>
            <person name="Lucchini G."/>
            <person name="Lutzenkirchen K."/>
            <person name="Maat M.J."/>
            <person name="Mallet L."/>
            <person name="Mannhaupt G."/>
            <person name="Martegani E."/>
            <person name="Mathieu A."/>
            <person name="Maurer C.T.C."/>
            <person name="McConnell D."/>
            <person name="McKee R.A."/>
            <person name="Messenguy F."/>
            <person name="Mewes H.-W."/>
            <person name="Molemans F."/>
            <person name="Montague M.A."/>
            <person name="Muzi Falconi M."/>
            <person name="Navas L."/>
            <person name="Newlon C.S."/>
            <person name="Noone D."/>
            <person name="Pallier C."/>
            <person name="Panzeri L."/>
            <person name="Pearson B.M."/>
            <person name="Perea J."/>
            <person name="Philippsen P."/>
            <person name="Pierard A."/>
            <person name="Planta R.J."/>
            <person name="Plevani P."/>
            <person name="Poetsch B."/>
            <person name="Pohl F.M."/>
            <person name="Purnelle B."/>
            <person name="Ramezani Rad M."/>
            <person name="Rasmussen S.W."/>
            <person name="Raynal A."/>
            <person name="Remacha M.A."/>
            <person name="Richterich P."/>
            <person name="Roberts A.B."/>
            <person name="Rodriguez F."/>
            <person name="Sanz E."/>
            <person name="Schaaff-Gerstenschlaeger I."/>
            <person name="Scherens B."/>
            <person name="Schweitzer B."/>
            <person name="Shu Y."/>
            <person name="Skala J."/>
            <person name="Slonimski P.P."/>
            <person name="Sor F."/>
            <person name="Soustelle C."/>
            <person name="Spiegelberg R."/>
            <person name="Stateva L.I."/>
            <person name="Steensma H.Y."/>
            <person name="Steiner S."/>
            <person name="Thierry A."/>
            <person name="Thireos G."/>
            <person name="Tzermia M."/>
            <person name="Urrestarazu L.A."/>
            <person name="Valle G."/>
            <person name="Vetter I."/>
            <person name="van Vliet-Reedijk J.C."/>
            <person name="Voet M."/>
            <person name="Volckaert G."/>
            <person name="Vreken P."/>
            <person name="Wang H."/>
            <person name="Warmington J.R."/>
            <person name="von Wettstein D."/>
            <person name="Wicksteed B.L."/>
            <person name="Wilson C."/>
            <person name="Wurst H."/>
            <person name="Xu G."/>
            <person name="Yoshikawa A."/>
            <person name="Zimmermann F.K."/>
            <person name="Sgouros J.G."/>
        </authorList>
    </citation>
    <scope>NUCLEOTIDE SEQUENCE [LARGE SCALE GENOMIC DNA]</scope>
    <source>
        <strain>ATCC 204508 / S288c</strain>
    </source>
</reference>
<reference key="4">
    <citation type="submission" date="2001-06" db="EMBL/GenBank/DDBJ databases">
        <authorList>
            <person name="Valles G."/>
            <person name="Volckaerts G."/>
        </authorList>
    </citation>
    <scope>SEQUENCE REVISION TO 375</scope>
</reference>
<reference key="5">
    <citation type="journal article" date="2014" name="G3 (Bethesda)">
        <title>The reference genome sequence of Saccharomyces cerevisiae: Then and now.</title>
        <authorList>
            <person name="Engel S.R."/>
            <person name="Dietrich F.S."/>
            <person name="Fisk D.G."/>
            <person name="Binkley G."/>
            <person name="Balakrishnan R."/>
            <person name="Costanzo M.C."/>
            <person name="Dwight S.S."/>
            <person name="Hitz B.C."/>
            <person name="Karra K."/>
            <person name="Nash R.S."/>
            <person name="Weng S."/>
            <person name="Wong E.D."/>
            <person name="Lloyd P."/>
            <person name="Skrzypek M.S."/>
            <person name="Miyasato S.R."/>
            <person name="Simison M."/>
            <person name="Cherry J.M."/>
        </authorList>
    </citation>
    <scope>GENOME REANNOTATION</scope>
    <source>
        <strain>ATCC 204508 / S288c</strain>
    </source>
</reference>
<reference key="6">
    <citation type="journal article" date="1980" name="Nature">
        <title>Insertion of the eukaryotic transposable element Ty1 creates a 5-base pair duplication.</title>
        <authorList>
            <person name="Farabaugh P.J."/>
            <person name="Fink G.R."/>
        </authorList>
    </citation>
    <scope>NUCLEOTIDE SEQUENCE OF 1-20</scope>
</reference>
<reference key="7">
    <citation type="journal article" date="1985" name="Proc. Natl. Acad. Sci. U.S.A.">
        <title>Transposable element sequences involved in the enhancement of yeast gene expression.</title>
        <authorList>
            <person name="Roeder G.S."/>
            <person name="Rose A.B."/>
            <person name="Pearlman R.E."/>
        </authorList>
    </citation>
    <scope>NUCLEOTIDE SEQUENCE [GENOMIC DNA] OF 1-16</scope>
</reference>
<reference key="8">
    <citation type="journal article" date="1993" name="Mol. Cell. Biol.">
        <title>Translation of the yeast transcriptional activator GCN4 is stimulated by purine limitation: implications for activation of the protein kinase GCN2.</title>
        <authorList>
            <person name="Rolfes R.J."/>
            <person name="Hinnebusch A.G."/>
        </authorList>
    </citation>
    <scope>INDUCTION</scope>
</reference>
<reference key="9">
    <citation type="journal article" date="2003" name="Nature">
        <title>Global analysis of protein expression in yeast.</title>
        <authorList>
            <person name="Ghaemmaghami S."/>
            <person name="Huh W.-K."/>
            <person name="Bower K."/>
            <person name="Howson R.W."/>
            <person name="Belle A."/>
            <person name="Dephoure N."/>
            <person name="O'Shea E.K."/>
            <person name="Weissman J.S."/>
        </authorList>
    </citation>
    <scope>LEVEL OF PROTEIN EXPRESSION [LARGE SCALE ANALYSIS]</scope>
</reference>
<protein>
    <recommendedName>
        <fullName evidence="8">Histidine biosynthesis trifunctional protein</fullName>
    </recommendedName>
    <domain>
        <recommendedName>
            <fullName>Phosphoribosyl-AMP cyclohydrolase</fullName>
            <ecNumber evidence="4">3.5.4.19</ecNumber>
        </recommendedName>
    </domain>
    <domain>
        <recommendedName>
            <fullName>Phosphoribosyl-ATP pyrophosphohydrolase</fullName>
            <ecNumber evidence="2">3.6.1.31</ecNumber>
        </recommendedName>
    </domain>
    <domain>
        <recommendedName>
            <fullName>Histidinol dehydrogenase</fullName>
            <shortName>HDH</shortName>
            <ecNumber evidence="3">1.1.1.23</ecNumber>
        </recommendedName>
    </domain>
</protein>
<feature type="chain" id="PRO_0000135914" description="Histidine biosynthesis trifunctional protein">
    <location>
        <begin position="1"/>
        <end position="799"/>
    </location>
</feature>
<feature type="region of interest" description="Phosphoribosyl-AMP cyclohydrolase" evidence="2">
    <location>
        <begin position="1"/>
        <end position="229"/>
    </location>
</feature>
<feature type="region of interest" description="Phosphoribosyl-ATP pyrophosphohydrolase" evidence="2">
    <location>
        <begin position="230"/>
        <end position="312"/>
    </location>
</feature>
<feature type="region of interest" description="Histidinol dehydrogenase" evidence="3">
    <location>
        <begin position="313"/>
        <end position="799"/>
    </location>
</feature>
<feature type="active site" evidence="1">
    <location>
        <position position="687"/>
    </location>
</feature>
<feature type="active site" evidence="1">
    <location>
        <position position="688"/>
    </location>
</feature>
<feature type="binding site" evidence="1">
    <location>
        <position position="618"/>
    </location>
    <ligand>
        <name>Zn(2+)</name>
        <dbReference type="ChEBI" id="CHEBI:29105"/>
    </ligand>
</feature>
<feature type="binding site" evidence="1">
    <location>
        <position position="621"/>
    </location>
    <ligand>
        <name>Zn(2+)</name>
        <dbReference type="ChEBI" id="CHEBI:29105"/>
    </ligand>
</feature>
<feature type="binding site" evidence="1">
    <location>
        <position position="721"/>
    </location>
    <ligand>
        <name>Zn(2+)</name>
        <dbReference type="ChEBI" id="CHEBI:29105"/>
    </ligand>
</feature>
<feature type="binding site" evidence="1">
    <location>
        <position position="780"/>
    </location>
    <ligand>
        <name>Zn(2+)</name>
        <dbReference type="ChEBI" id="CHEBI:29105"/>
    </ligand>
</feature>
<feature type="sequence conflict" description="In Ref. 1; CAA24617." evidence="8" ref="1">
    <original>A</original>
    <variation>R</variation>
    <location>
        <position position="53"/>
    </location>
</feature>
<feature type="sequence conflict" description="In Ref. 1; CAA24617." evidence="8" ref="1">
    <original>H</original>
    <variation>Y</variation>
    <location>
        <position position="386"/>
    </location>
</feature>
<feature type="sequence conflict" description="In Ref. 1; CAA24617." evidence="8" ref="1">
    <original>AL</original>
    <variation>VF</variation>
    <location>
        <begin position="402"/>
        <end position="403"/>
    </location>
</feature>
<feature type="sequence conflict" description="In Ref. 1; CAA24617." evidence="8" ref="1">
    <original>D</original>
    <variation>N</variation>
    <location>
        <position position="441"/>
    </location>
</feature>
<feature type="sequence conflict" description="In Ref. 1; CAA24617." evidence="8" ref="1">
    <original>I</original>
    <variation>F</variation>
    <location>
        <position position="794"/>
    </location>
</feature>
<sequence>MVLPILPLIDDLASWNSKKEYVSLVGQVLLDGSSLSNEEILQFSKEEEVPLVALSLPSGKFSDDEIIAFLNNGVSSLFIASQDAKTAEHLVEQLNVPKERVVVEENGVFSNQFMVKQKFSQDKIVSIKKLSKDMLTKEVLGEVRTDRPDGLYTTLVVDQYERCLGLVYSSKKSIAKAIDLGRGVYYSRSRNEIWIKGETSGNGQKLLQISTDCDSDALKFIVEQENVGFCHLETMSCFGEFKHGLVGLESLLKQRLQDAPEESYTRRLFNDSALLDAKIKEEAEELTEAKGKKELSWEAADLFYFALAKLVANDVSLKDVENNLNMKHLKVTRRKGDAKPKFVGQPKAEEEKLTGPIHLDVVKASDKVGVQKALSRPIQKTSEIMHLVNPIIENVRDKGNSALLEYTEKFDGVKLSNPVLNAPFPEEYFEGLTEEMKEALDLSIENVRKFHAAQLPTETLEVETQPGVLCSRFPRPIEKVGLYIPGGTAILPSTALMLGVPAQVAQCKEIVFASPPRKSDGKVSPEVVYVAEKVGASKIVLAGGAQAVAAMAYGTETIPKVDKILGPGNQFVTAAKMYVQNDTQALCSIDMPAGPSEVLVIADEDADVDFVASDLLSQAEHGIDSQVILVGVNLSEKKIQEIQDAVHNQALQLPRVDIVRKCIAHSTIVLCDGYEEALEMSNQYAPEHLILQIANANDYVKLVDNAGSVFVGAYTPESCGDYSSGTNHTLPTYGYARQYSGANTATFQKFITAQNITPEGLENIGRAVMCVAKKEGLDGHRNAVKIRMSKLGLIPKDFQ</sequence>
<dbReference type="EC" id="3.5.4.19" evidence="4"/>
<dbReference type="EC" id="3.6.1.31" evidence="2"/>
<dbReference type="EC" id="1.1.1.23" evidence="3"/>
<dbReference type="EMBL" id="V01310">
    <property type="protein sequence ID" value="CAA24617.1"/>
    <property type="molecule type" value="Genomic_DNA"/>
</dbReference>
<dbReference type="EMBL" id="X59720">
    <property type="protein sequence ID" value="CAA42355.2"/>
    <property type="molecule type" value="Genomic_DNA"/>
</dbReference>
<dbReference type="EMBL" id="V01309">
    <property type="protein sequence ID" value="CAA24616.1"/>
    <property type="molecule type" value="Genomic_DNA"/>
</dbReference>
<dbReference type="EMBL" id="M11491">
    <property type="protein sequence ID" value="AAA67504.1"/>
    <property type="molecule type" value="Genomic_DNA"/>
</dbReference>
<dbReference type="EMBL" id="M11492">
    <property type="protein sequence ID" value="AAA67505.1"/>
    <property type="molecule type" value="Genomic_DNA"/>
</dbReference>
<dbReference type="EMBL" id="M11694">
    <property type="protein sequence ID" value="AAA18400.1"/>
    <property type="molecule type" value="Unassigned_DNA"/>
</dbReference>
<dbReference type="EMBL" id="M11695">
    <property type="protein sequence ID" value="AAA18401.1"/>
    <property type="molecule type" value="Unassigned_DNA"/>
</dbReference>
<dbReference type="EMBL" id="M11696">
    <property type="protein sequence ID" value="AAA18402.1"/>
    <property type="molecule type" value="Unassigned_DNA"/>
</dbReference>
<dbReference type="EMBL" id="BK006937">
    <property type="protein sequence ID" value="DAA07454.1"/>
    <property type="molecule type" value="Genomic_DNA"/>
</dbReference>
<dbReference type="PIR" id="S17473">
    <property type="entry name" value="SHBY"/>
</dbReference>
<dbReference type="RefSeq" id="NP_009900.2">
    <property type="nucleotide sequence ID" value="NM_001178675.1"/>
</dbReference>
<dbReference type="SMR" id="P00815"/>
<dbReference type="BioGRID" id="30953">
    <property type="interactions" value="51"/>
</dbReference>
<dbReference type="DIP" id="DIP-6402N"/>
<dbReference type="FunCoup" id="P00815">
    <property type="interactions" value="470"/>
</dbReference>
<dbReference type="IntAct" id="P00815">
    <property type="interactions" value="21"/>
</dbReference>
<dbReference type="MINT" id="P00815"/>
<dbReference type="STRING" id="4932.YCL030C"/>
<dbReference type="GlyGen" id="P00815">
    <property type="glycosylation" value="2 sites, 1 O-linked glycan (2 sites)"/>
</dbReference>
<dbReference type="iPTMnet" id="P00815"/>
<dbReference type="PaxDb" id="4932-YCL030C"/>
<dbReference type="PeptideAtlas" id="P00815"/>
<dbReference type="EnsemblFungi" id="YCL030C_mRNA">
    <property type="protein sequence ID" value="YCL030C"/>
    <property type="gene ID" value="YCL030C"/>
</dbReference>
<dbReference type="GeneID" id="850327"/>
<dbReference type="KEGG" id="sce:YCL030C"/>
<dbReference type="AGR" id="SGD:S000000535"/>
<dbReference type="SGD" id="S000000535">
    <property type="gene designation" value="HIS4"/>
</dbReference>
<dbReference type="VEuPathDB" id="FungiDB:YCL030C"/>
<dbReference type="eggNOG" id="KOG2697">
    <property type="taxonomic scope" value="Eukaryota"/>
</dbReference>
<dbReference type="eggNOG" id="KOG4311">
    <property type="taxonomic scope" value="Eukaryota"/>
</dbReference>
<dbReference type="HOGENOM" id="CLU_006732_0_1_1"/>
<dbReference type="InParanoid" id="P00815"/>
<dbReference type="OMA" id="SVFIGAW"/>
<dbReference type="OrthoDB" id="1703565at2759"/>
<dbReference type="BioCyc" id="YEAST:YCL030C-MONOMER"/>
<dbReference type="UniPathway" id="UPA00031">
    <property type="reaction ID" value="UER00007"/>
</dbReference>
<dbReference type="UniPathway" id="UPA00031">
    <property type="reaction ID" value="UER00008"/>
</dbReference>
<dbReference type="UniPathway" id="UPA00031">
    <property type="reaction ID" value="UER00014"/>
</dbReference>
<dbReference type="BioGRID-ORCS" id="850327">
    <property type="hits" value="0 hits in 10 CRISPR screens"/>
</dbReference>
<dbReference type="CD-CODE" id="E03F929F">
    <property type="entry name" value="Stress granule"/>
</dbReference>
<dbReference type="PRO" id="PR:P00815"/>
<dbReference type="Proteomes" id="UP000002311">
    <property type="component" value="Chromosome III"/>
</dbReference>
<dbReference type="RNAct" id="P00815">
    <property type="molecule type" value="protein"/>
</dbReference>
<dbReference type="GO" id="GO:0005737">
    <property type="term" value="C:cytoplasm"/>
    <property type="evidence" value="ECO:0007005"/>
    <property type="project" value="SGD"/>
</dbReference>
<dbReference type="GO" id="GO:0005524">
    <property type="term" value="F:ATP binding"/>
    <property type="evidence" value="ECO:0007669"/>
    <property type="project" value="UniProtKB-KW"/>
</dbReference>
<dbReference type="GO" id="GO:0004399">
    <property type="term" value="F:histidinol dehydrogenase activity"/>
    <property type="evidence" value="ECO:0000314"/>
    <property type="project" value="SGD"/>
</dbReference>
<dbReference type="GO" id="GO:0046872">
    <property type="term" value="F:metal ion binding"/>
    <property type="evidence" value="ECO:0007669"/>
    <property type="project" value="UniProtKB-KW"/>
</dbReference>
<dbReference type="GO" id="GO:0051287">
    <property type="term" value="F:NAD binding"/>
    <property type="evidence" value="ECO:0007669"/>
    <property type="project" value="InterPro"/>
</dbReference>
<dbReference type="GO" id="GO:0004635">
    <property type="term" value="F:phosphoribosyl-AMP cyclohydrolase activity"/>
    <property type="evidence" value="ECO:0000314"/>
    <property type="project" value="SGD"/>
</dbReference>
<dbReference type="GO" id="GO:0004636">
    <property type="term" value="F:phosphoribosyl-ATP diphosphatase activity"/>
    <property type="evidence" value="ECO:0000314"/>
    <property type="project" value="SGD"/>
</dbReference>
<dbReference type="GO" id="GO:0000105">
    <property type="term" value="P:L-histidine biosynthetic process"/>
    <property type="evidence" value="ECO:0000315"/>
    <property type="project" value="SGD"/>
</dbReference>
<dbReference type="CDD" id="cd06572">
    <property type="entry name" value="Histidinol_dh"/>
    <property type="match status" value="1"/>
</dbReference>
<dbReference type="CDD" id="cd11546">
    <property type="entry name" value="NTP-PPase_His4"/>
    <property type="match status" value="1"/>
</dbReference>
<dbReference type="FunFam" id="1.10.287.1080:FF:000002">
    <property type="entry name" value="Histidine biosynthesis bifunctional protein HisIE"/>
    <property type="match status" value="1"/>
</dbReference>
<dbReference type="FunFam" id="1.20.5.1300:FF:000001">
    <property type="entry name" value="Histidine biosynthesis trifunctional protein"/>
    <property type="match status" value="1"/>
</dbReference>
<dbReference type="FunFam" id="3.10.20.810:FF:000002">
    <property type="entry name" value="Histidine biosynthesis trifunctional protein"/>
    <property type="match status" value="1"/>
</dbReference>
<dbReference type="FunFam" id="3.40.50.1980:FF:000050">
    <property type="entry name" value="Histidine biosynthesis trifunctional protein"/>
    <property type="match status" value="1"/>
</dbReference>
<dbReference type="FunFam" id="3.40.50.1980:FF:000001">
    <property type="entry name" value="Histidinol dehydrogenase"/>
    <property type="match status" value="1"/>
</dbReference>
<dbReference type="Gene3D" id="1.20.5.1300">
    <property type="match status" value="1"/>
</dbReference>
<dbReference type="Gene3D" id="1.10.287.1080">
    <property type="entry name" value="MazG-like"/>
    <property type="match status" value="1"/>
</dbReference>
<dbReference type="Gene3D" id="3.40.50.1980">
    <property type="entry name" value="Nitrogenase molybdenum iron protein domain"/>
    <property type="match status" value="2"/>
</dbReference>
<dbReference type="Gene3D" id="3.10.20.810">
    <property type="entry name" value="Phosphoribosyl-AMP cyclohydrolase"/>
    <property type="match status" value="1"/>
</dbReference>
<dbReference type="HAMAP" id="MF_01024">
    <property type="entry name" value="HisD"/>
    <property type="match status" value="1"/>
</dbReference>
<dbReference type="InterPro" id="IPR016161">
    <property type="entry name" value="Ald_DH/histidinol_DH"/>
</dbReference>
<dbReference type="InterPro" id="IPR008179">
    <property type="entry name" value="HisE"/>
</dbReference>
<dbReference type="InterPro" id="IPR016298">
    <property type="entry name" value="Histidine_synth_trifunct"/>
</dbReference>
<dbReference type="InterPro" id="IPR001692">
    <property type="entry name" value="Histidinol_DH_CS"/>
</dbReference>
<dbReference type="InterPro" id="IPR012131">
    <property type="entry name" value="Hstdl_DH"/>
</dbReference>
<dbReference type="InterPro" id="IPR021130">
    <property type="entry name" value="PRib-ATP_PPHydrolase-like"/>
</dbReference>
<dbReference type="InterPro" id="IPR002496">
    <property type="entry name" value="PRib_AMP_CycHydrolase_dom"/>
</dbReference>
<dbReference type="InterPro" id="IPR038019">
    <property type="entry name" value="PRib_AMP_CycHydrolase_sf"/>
</dbReference>
<dbReference type="NCBIfam" id="TIGR00069">
    <property type="entry name" value="hisD"/>
    <property type="match status" value="1"/>
</dbReference>
<dbReference type="NCBIfam" id="TIGR03188">
    <property type="entry name" value="histidine_hisI"/>
    <property type="match status" value="1"/>
</dbReference>
<dbReference type="PANTHER" id="PTHR21256:SF2">
    <property type="entry name" value="HISTIDINE BIOSYNTHESIS TRIFUNCTIONAL PROTEIN"/>
    <property type="match status" value="1"/>
</dbReference>
<dbReference type="PANTHER" id="PTHR21256">
    <property type="entry name" value="HISTIDINOL DEHYDROGENASE HDH"/>
    <property type="match status" value="1"/>
</dbReference>
<dbReference type="Pfam" id="PF00815">
    <property type="entry name" value="Histidinol_dh"/>
    <property type="match status" value="1"/>
</dbReference>
<dbReference type="Pfam" id="PF01502">
    <property type="entry name" value="PRA-CH"/>
    <property type="match status" value="1"/>
</dbReference>
<dbReference type="Pfam" id="PF01503">
    <property type="entry name" value="PRA-PH"/>
    <property type="match status" value="1"/>
</dbReference>
<dbReference type="PIRSF" id="PIRSF001257">
    <property type="entry name" value="His_trifunctional"/>
    <property type="match status" value="1"/>
</dbReference>
<dbReference type="PRINTS" id="PR00083">
    <property type="entry name" value="HOLDHDRGNASE"/>
</dbReference>
<dbReference type="SUPFAM" id="SSF53720">
    <property type="entry name" value="ALDH-like"/>
    <property type="match status" value="1"/>
</dbReference>
<dbReference type="SUPFAM" id="SSF101386">
    <property type="entry name" value="all-alpha NTP pyrophosphatases"/>
    <property type="match status" value="1"/>
</dbReference>
<dbReference type="SUPFAM" id="SSF141734">
    <property type="entry name" value="HisI-like"/>
    <property type="match status" value="1"/>
</dbReference>
<dbReference type="PROSITE" id="PS00611">
    <property type="entry name" value="HISOL_DEHYDROGENASE"/>
    <property type="match status" value="1"/>
</dbReference>
<organism>
    <name type="scientific">Saccharomyces cerevisiae (strain ATCC 204508 / S288c)</name>
    <name type="common">Baker's yeast</name>
    <dbReference type="NCBI Taxonomy" id="559292"/>
    <lineage>
        <taxon>Eukaryota</taxon>
        <taxon>Fungi</taxon>
        <taxon>Dikarya</taxon>
        <taxon>Ascomycota</taxon>
        <taxon>Saccharomycotina</taxon>
        <taxon>Saccharomycetes</taxon>
        <taxon>Saccharomycetales</taxon>
        <taxon>Saccharomycetaceae</taxon>
        <taxon>Saccharomyces</taxon>
    </lineage>
</organism>